<accession>B4T7Q1</accession>
<organism>
    <name type="scientific">Salmonella heidelberg (strain SL476)</name>
    <dbReference type="NCBI Taxonomy" id="454169"/>
    <lineage>
        <taxon>Bacteria</taxon>
        <taxon>Pseudomonadati</taxon>
        <taxon>Pseudomonadota</taxon>
        <taxon>Gammaproteobacteria</taxon>
        <taxon>Enterobacterales</taxon>
        <taxon>Enterobacteriaceae</taxon>
        <taxon>Salmonella</taxon>
    </lineage>
</organism>
<name>FRSA_SALHS</name>
<keyword id="KW-0378">Hydrolase</keyword>
<keyword id="KW-0719">Serine esterase</keyword>
<proteinExistence type="inferred from homology"/>
<comment type="function">
    <text evidence="1">Catalyzes the hydrolysis of esters.</text>
</comment>
<comment type="catalytic activity">
    <reaction evidence="1">
        <text>a carboxylic ester + H2O = an alcohol + a carboxylate + H(+)</text>
        <dbReference type="Rhea" id="RHEA:21164"/>
        <dbReference type="ChEBI" id="CHEBI:15377"/>
        <dbReference type="ChEBI" id="CHEBI:15378"/>
        <dbReference type="ChEBI" id="CHEBI:29067"/>
        <dbReference type="ChEBI" id="CHEBI:30879"/>
        <dbReference type="ChEBI" id="CHEBI:33308"/>
        <dbReference type="EC" id="3.1.1.1"/>
    </reaction>
</comment>
<comment type="similarity">
    <text evidence="1">Belongs to the FrsA family.</text>
</comment>
<protein>
    <recommendedName>
        <fullName evidence="1">Esterase FrsA</fullName>
        <ecNumber evidence="1">3.1.1.1</ecNumber>
    </recommendedName>
</protein>
<sequence length="414" mass="47160">MTQANLSETLFKPRFKHTETSTLVRRFNRGSQPPMQSALDGKNVPHWYRMINRLMWIWRGVDPREILDVQARIVMSDAERTDDDLYDTVIGYRGGNWIYEWAKQAMDWQQKACQEQDAMRSGRYWLHASTLYNIAAYPHLKGDELAEQAQALANRAYEEAAQRLPGSLREMEFAVPGGSPVTAFLHMPKGDGPFPTVLMCGGLDAMQTDYYTLYERYFAPRGIAMLTLDMPSVGFSSKWKLTQDSSLLHQHVLKALPNVPWVDHTRVAAFGFRFGANVAVRLAYLEAPRLKAVACLGPVVHALLSDPQRQSTVPEMYLDVLASRLGMHDASDEALRVELNRYSLKVQGLLGRRCPTPMLSGFWKNDPFSPEEESRLITTSSSDGKLIEIPFNPVYRNFDRALQEITDWINHRLC</sequence>
<dbReference type="EC" id="3.1.1.1" evidence="1"/>
<dbReference type="EMBL" id="CP001120">
    <property type="protein sequence ID" value="ACF70303.1"/>
    <property type="molecule type" value="Genomic_DNA"/>
</dbReference>
<dbReference type="RefSeq" id="WP_000189588.1">
    <property type="nucleotide sequence ID" value="NC_011083.1"/>
</dbReference>
<dbReference type="SMR" id="B4T7Q1"/>
<dbReference type="ESTHER" id="salty-yafa">
    <property type="family name" value="Duf_1100-R"/>
</dbReference>
<dbReference type="KEGG" id="seh:SeHA_C0359"/>
<dbReference type="HOGENOM" id="CLU_036819_0_0_6"/>
<dbReference type="Proteomes" id="UP000001866">
    <property type="component" value="Chromosome"/>
</dbReference>
<dbReference type="GO" id="GO:0106435">
    <property type="term" value="F:carboxylesterase activity"/>
    <property type="evidence" value="ECO:0007669"/>
    <property type="project" value="UniProtKB-EC"/>
</dbReference>
<dbReference type="FunFam" id="3.40.50.1820:FF:000022">
    <property type="entry name" value="Esterase FrsA"/>
    <property type="match status" value="1"/>
</dbReference>
<dbReference type="Gene3D" id="3.40.50.1820">
    <property type="entry name" value="alpha/beta hydrolase"/>
    <property type="match status" value="1"/>
</dbReference>
<dbReference type="HAMAP" id="MF_01063">
    <property type="entry name" value="FrsA"/>
    <property type="match status" value="1"/>
</dbReference>
<dbReference type="InterPro" id="IPR029058">
    <property type="entry name" value="AB_hydrolase_fold"/>
</dbReference>
<dbReference type="InterPro" id="IPR043423">
    <property type="entry name" value="FrsA"/>
</dbReference>
<dbReference type="InterPro" id="IPR010520">
    <property type="entry name" value="FrsA-like"/>
</dbReference>
<dbReference type="InterPro" id="IPR050261">
    <property type="entry name" value="FrsA_esterase"/>
</dbReference>
<dbReference type="NCBIfam" id="NF003460">
    <property type="entry name" value="PRK05077.1"/>
    <property type="match status" value="1"/>
</dbReference>
<dbReference type="PANTHER" id="PTHR22946">
    <property type="entry name" value="DIENELACTONE HYDROLASE DOMAIN-CONTAINING PROTEIN-RELATED"/>
    <property type="match status" value="1"/>
</dbReference>
<dbReference type="PANTHER" id="PTHR22946:SF4">
    <property type="entry name" value="ESTERASE FRSA"/>
    <property type="match status" value="1"/>
</dbReference>
<dbReference type="Pfam" id="PF06500">
    <property type="entry name" value="FrsA-like"/>
    <property type="match status" value="1"/>
</dbReference>
<dbReference type="SUPFAM" id="SSF53474">
    <property type="entry name" value="alpha/beta-Hydrolases"/>
    <property type="match status" value="1"/>
</dbReference>
<feature type="chain" id="PRO_1000136524" description="Esterase FrsA">
    <location>
        <begin position="1"/>
        <end position="414"/>
    </location>
</feature>
<reference key="1">
    <citation type="journal article" date="2011" name="J. Bacteriol.">
        <title>Comparative genomics of 28 Salmonella enterica isolates: evidence for CRISPR-mediated adaptive sublineage evolution.</title>
        <authorList>
            <person name="Fricke W.F."/>
            <person name="Mammel M.K."/>
            <person name="McDermott P.F."/>
            <person name="Tartera C."/>
            <person name="White D.G."/>
            <person name="Leclerc J.E."/>
            <person name="Ravel J."/>
            <person name="Cebula T.A."/>
        </authorList>
    </citation>
    <scope>NUCLEOTIDE SEQUENCE [LARGE SCALE GENOMIC DNA]</scope>
    <source>
        <strain>SL476</strain>
    </source>
</reference>
<gene>
    <name evidence="1" type="primary">frsA</name>
    <name type="ordered locus">SeHA_C0359</name>
</gene>
<evidence type="ECO:0000255" key="1">
    <source>
        <dbReference type="HAMAP-Rule" id="MF_01063"/>
    </source>
</evidence>